<protein>
    <recommendedName>
        <fullName>Supervillin</fullName>
    </recommendedName>
    <alternativeName>
        <fullName>Archvillin</fullName>
    </alternativeName>
    <alternativeName>
        <fullName>p205/p250</fullName>
    </alternativeName>
</protein>
<feature type="chain" id="PRO_0000218741" description="Supervillin">
    <location>
        <begin position="1"/>
        <end position="2170"/>
    </location>
</feature>
<feature type="repeat" description="Gelsolin-like 1">
    <location>
        <begin position="1397"/>
        <end position="1496"/>
    </location>
</feature>
<feature type="repeat" description="Gelsolin-like 2">
    <location>
        <begin position="1516"/>
        <end position="1638"/>
    </location>
</feature>
<feature type="repeat" description="Gelsolin-like 3">
    <location>
        <begin position="1708"/>
        <end position="1818"/>
    </location>
</feature>
<feature type="repeat" description="Gelsolin-like 4">
    <location>
        <begin position="1837"/>
        <end position="1938"/>
    </location>
</feature>
<feature type="repeat" description="Gelsolin-like 5">
    <location>
        <begin position="1971"/>
        <end position="2078"/>
    </location>
</feature>
<feature type="domain" description="HP" evidence="4">
    <location>
        <begin position="2107"/>
        <end position="2170"/>
    </location>
</feature>
<feature type="region of interest" description="Interaction with MYLK" evidence="1">
    <location>
        <begin position="1"/>
        <end position="167"/>
    </location>
</feature>
<feature type="region of interest" description="Disordered" evidence="5">
    <location>
        <begin position="37"/>
        <end position="94"/>
    </location>
</feature>
<feature type="region of interest" description="Disordered" evidence="5">
    <location>
        <begin position="107"/>
        <end position="327"/>
    </location>
</feature>
<feature type="region of interest" description="Disordered" evidence="5">
    <location>
        <begin position="413"/>
        <end position="444"/>
    </location>
</feature>
<feature type="region of interest" description="Disordered" evidence="5">
    <location>
        <begin position="511"/>
        <end position="546"/>
    </location>
</feature>
<feature type="region of interest" description="Disordered" evidence="5">
    <location>
        <begin position="567"/>
        <end position="643"/>
    </location>
</feature>
<feature type="region of interest" description="Disordered" evidence="5">
    <location>
        <begin position="743"/>
        <end position="771"/>
    </location>
</feature>
<feature type="region of interest" description="Disordered" evidence="5">
    <location>
        <begin position="887"/>
        <end position="909"/>
    </location>
</feature>
<feature type="region of interest" description="Disordered" evidence="5">
    <location>
        <begin position="1117"/>
        <end position="1137"/>
    </location>
</feature>
<feature type="region of interest" description="Interaction with NEB" evidence="1">
    <location>
        <begin position="1375"/>
        <end position="1643"/>
    </location>
</feature>
<feature type="compositionally biased region" description="Polar residues" evidence="5">
    <location>
        <begin position="63"/>
        <end position="73"/>
    </location>
</feature>
<feature type="compositionally biased region" description="Polar residues" evidence="5">
    <location>
        <begin position="81"/>
        <end position="90"/>
    </location>
</feature>
<feature type="compositionally biased region" description="Basic and acidic residues" evidence="5">
    <location>
        <begin position="134"/>
        <end position="166"/>
    </location>
</feature>
<feature type="compositionally biased region" description="Polar residues" evidence="5">
    <location>
        <begin position="167"/>
        <end position="195"/>
    </location>
</feature>
<feature type="compositionally biased region" description="Polar residues" evidence="5">
    <location>
        <begin position="230"/>
        <end position="241"/>
    </location>
</feature>
<feature type="compositionally biased region" description="Basic and acidic residues" evidence="5">
    <location>
        <begin position="261"/>
        <end position="272"/>
    </location>
</feature>
<feature type="compositionally biased region" description="Basic and acidic residues" evidence="5">
    <location>
        <begin position="286"/>
        <end position="297"/>
    </location>
</feature>
<feature type="compositionally biased region" description="Polar residues" evidence="5">
    <location>
        <begin position="298"/>
        <end position="313"/>
    </location>
</feature>
<feature type="compositionally biased region" description="Basic and acidic residues" evidence="5">
    <location>
        <begin position="427"/>
        <end position="444"/>
    </location>
</feature>
<feature type="compositionally biased region" description="Basic and acidic residues" evidence="5">
    <location>
        <begin position="570"/>
        <end position="582"/>
    </location>
</feature>
<feature type="compositionally biased region" description="Basic and acidic residues" evidence="5">
    <location>
        <begin position="606"/>
        <end position="615"/>
    </location>
</feature>
<feature type="compositionally biased region" description="Basic and acidic residues" evidence="5">
    <location>
        <begin position="750"/>
        <end position="762"/>
    </location>
</feature>
<feature type="compositionally biased region" description="Basic and acidic residues" evidence="5">
    <location>
        <begin position="1119"/>
        <end position="1137"/>
    </location>
</feature>
<feature type="modified residue" description="Phosphoserine" evidence="3">
    <location>
        <position position="50"/>
    </location>
</feature>
<feature type="modified residue" description="Phosphoserine" evidence="11">
    <location>
        <position position="220"/>
    </location>
</feature>
<feature type="modified residue" description="Phosphoserine" evidence="9 11">
    <location>
        <position position="227"/>
    </location>
</feature>
<feature type="modified residue" description="Phosphoserine" evidence="11">
    <location>
        <position position="241"/>
    </location>
</feature>
<feature type="modified residue" description="Phosphoserine" evidence="11">
    <location>
        <position position="299"/>
    </location>
</feature>
<feature type="modified residue" description="Phosphoserine" evidence="11">
    <location>
        <position position="300"/>
    </location>
</feature>
<feature type="modified residue" description="Phosphoserine" evidence="11">
    <location>
        <position position="632"/>
    </location>
</feature>
<feature type="modified residue" description="Phosphoserine" evidence="3">
    <location>
        <position position="666"/>
    </location>
</feature>
<feature type="modified residue" description="Phosphoserine" evidence="3">
    <location>
        <position position="728"/>
    </location>
</feature>
<feature type="modified residue" description="Phosphoserine" evidence="11">
    <location>
        <position position="761"/>
    </location>
</feature>
<feature type="modified residue" description="Phosphotyrosine" evidence="11">
    <location>
        <position position="809"/>
    </location>
</feature>
<feature type="modified residue" description="Phosphothreonine" evidence="11">
    <location>
        <position position="811"/>
    </location>
</feature>
<feature type="modified residue" description="Phosphoserine" evidence="8 11">
    <location>
        <position position="857"/>
    </location>
</feature>
<feature type="modified residue" description="Phosphoserine" evidence="3">
    <location>
        <position position="877"/>
    </location>
</feature>
<feature type="modified residue" description="Phosphoserine" evidence="3">
    <location>
        <position position="881"/>
    </location>
</feature>
<feature type="modified residue" description="Phosphoserine" evidence="8 10 11">
    <location>
        <position position="960"/>
    </location>
</feature>
<feature type="modified residue" description="Phosphoserine" evidence="11">
    <location>
        <position position="1011"/>
    </location>
</feature>
<feature type="modified residue" description="Phosphoserine" evidence="11">
    <location>
        <position position="1031"/>
    </location>
</feature>
<feature type="modified residue" description="Phosphoserine" evidence="3">
    <location>
        <position position="1077"/>
    </location>
</feature>
<feature type="modified residue" description="Omega-N-methylarginine" evidence="12">
    <location>
        <position position="1159"/>
    </location>
</feature>
<feature type="modified residue" description="Phosphoserine" evidence="11">
    <location>
        <position position="1181"/>
    </location>
</feature>
<feature type="modified residue" description="Phosphoserine" evidence="11">
    <location>
        <position position="1184"/>
    </location>
</feature>
<feature type="modified residue" description="Phosphothreonine" evidence="11">
    <location>
        <position position="1186"/>
    </location>
</feature>
<feature type="modified residue" description="Phosphoserine" evidence="11">
    <location>
        <position position="1190"/>
    </location>
</feature>
<feature type="modified residue" description="Phosphoserine" evidence="3">
    <location>
        <position position="1278"/>
    </location>
</feature>
<feature type="modified residue" description="Phosphoserine" evidence="11">
    <location>
        <position position="1361"/>
    </location>
</feature>
<feature type="splice variant" id="VSP_058333" description="In isoform 2.">
    <location>
        <begin position="257"/>
        <end position="628"/>
    </location>
</feature>
<feature type="splice variant" id="VSP_058334" description="In isoform 2.">
    <location>
        <begin position="709"/>
        <end position="740"/>
    </location>
</feature>
<proteinExistence type="evidence at protein level"/>
<keyword id="KW-0009">Actin-binding</keyword>
<keyword id="KW-0025">Alternative splicing</keyword>
<keyword id="KW-0106">Calcium</keyword>
<keyword id="KW-0965">Cell junction</keyword>
<keyword id="KW-1003">Cell membrane</keyword>
<keyword id="KW-0966">Cell projection</keyword>
<keyword id="KW-0963">Cytoplasm</keyword>
<keyword id="KW-0206">Cytoskeleton</keyword>
<keyword id="KW-0472">Membrane</keyword>
<keyword id="KW-0488">Methylation</keyword>
<keyword id="KW-0597">Phosphoprotein</keyword>
<keyword id="KW-1185">Reference proteome</keyword>
<keyword id="KW-0677">Repeat</keyword>
<comment type="function">
    <molecule>Isoform 1</molecule>
    <text evidence="3">Forms a high-affinity link between the actin cytoskeleton and the membrane. Is among the first costameric proteins to assemble during myogenesis and it contributes to myogenic membrane structure and differentiation. Appears to be involved in myosin II assembly. May modulate myosin II regulation through MLCK during cell spreading, an initial step in cell migration. May play a role in invadopodial function.</text>
</comment>
<comment type="function">
    <molecule>Isoform 2</molecule>
    <text evidence="2">May be involved in modulation of focal adhesions. Supervillin-mediated down-regulation of focal adhesions involves binding to TRIP6. Plays a role in cytokinesis through KIF14 interaction (By similarity).</text>
</comment>
<comment type="subunit">
    <text evidence="2 6">Associates with F-actin (By similarity). Interacts with NEB (By similarity). Interacts with MYH9 (By similarity). Interacts with MYLK (By similarity). Interacts with TASOR (PubMed:31112734).</text>
</comment>
<comment type="subunit">
    <molecule>Isoform 2</molecule>
    <text evidence="2">Interacts with TRIP6 (By similarity). Interacts with DYNLT1 (By similarity). Interacts with KIF14; at midbody during cytokinesis (By similarity).</text>
</comment>
<comment type="subcellular location">
    <subcellularLocation>
        <location evidence="3">Cell membrane</location>
        <topology evidence="3">Peripheral membrane protein</topology>
        <orientation evidence="3">Cytoplasmic side</orientation>
    </subcellularLocation>
    <subcellularLocation>
        <location evidence="3">Cytoplasm</location>
        <location evidence="3">Cytoskeleton</location>
    </subcellularLocation>
    <subcellularLocation>
        <location evidence="3">Cell projection</location>
        <location evidence="3">Invadopodium</location>
    </subcellularLocation>
    <subcellularLocation>
        <location evidence="3">Cell projection</location>
        <location evidence="3">Podosome</location>
    </subcellularLocation>
    <subcellularLocation>
        <location evidence="2">Midbody</location>
    </subcellularLocation>
    <subcellularLocation>
        <location evidence="2">Cleavage furrow</location>
    </subcellularLocation>
    <text evidence="3">Tightly associated with both actin filaments and plasma membranes.</text>
</comment>
<comment type="alternative products">
    <event type="alternative splicing"/>
    <isoform>
        <id>Q8K4L3-1</id>
        <name>1</name>
        <name evidence="3">Archvillin</name>
        <sequence type="displayed"/>
    </isoform>
    <isoform>
        <id>Q8K4L3-3</id>
        <name>2</name>
        <name evidence="3">Supervillin</name>
        <sequence type="described" ref="VSP_058333 VSP_058334"/>
    </isoform>
</comment>
<comment type="tissue specificity">
    <text evidence="6">Expressed in the heart, tongue and granular cells within the cerebellum.</text>
</comment>
<comment type="domain">
    <text evidence="1">As opposed to other villin-type headpiece domains, supervillin HP (SVHP) doesn't bind F-actin due to the absence of a conformationally flexible region (V-loop).</text>
</comment>
<comment type="similarity">
    <text evidence="7">Belongs to the villin/gelsolin family.</text>
</comment>
<name>SVIL_MOUSE</name>
<organism>
    <name type="scientific">Mus musculus</name>
    <name type="common">Mouse</name>
    <dbReference type="NCBI Taxonomy" id="10090"/>
    <lineage>
        <taxon>Eukaryota</taxon>
        <taxon>Metazoa</taxon>
        <taxon>Chordata</taxon>
        <taxon>Craniata</taxon>
        <taxon>Vertebrata</taxon>
        <taxon>Euteleostomi</taxon>
        <taxon>Mammalia</taxon>
        <taxon>Eutheria</taxon>
        <taxon>Euarchontoglires</taxon>
        <taxon>Glires</taxon>
        <taxon>Rodentia</taxon>
        <taxon>Myomorpha</taxon>
        <taxon>Muroidea</taxon>
        <taxon>Muridae</taxon>
        <taxon>Murinae</taxon>
        <taxon>Mus</taxon>
        <taxon>Mus</taxon>
    </lineage>
</organism>
<gene>
    <name type="primary">Svil</name>
</gene>
<reference key="1">
    <citation type="journal article" date="2003" name="J. Cell Sci.">
        <title>Archvillin, a muscle-specific isoform of supervillin, is an early expressed component of the costameric membrane skeleton.</title>
        <authorList>
            <person name="Oh S.W."/>
            <person name="Pope R.K."/>
            <person name="Smith K.P."/>
            <person name="Crowley J.L."/>
            <person name="Nebl T."/>
            <person name="Lawrence J.B."/>
            <person name="Luna E.J."/>
        </authorList>
    </citation>
    <scope>NUCLEOTIDE SEQUENCE [MRNA]</scope>
    <source>
        <tissue>Skeletal muscle</tissue>
    </source>
</reference>
<reference key="2">
    <citation type="journal article" date="2009" name="PLoS Biol.">
        <title>Lineage-specific biology revealed by a finished genome assembly of the mouse.</title>
        <authorList>
            <person name="Church D.M."/>
            <person name="Goodstadt L."/>
            <person name="Hillier L.W."/>
            <person name="Zody M.C."/>
            <person name="Goldstein S."/>
            <person name="She X."/>
            <person name="Bult C.J."/>
            <person name="Agarwala R."/>
            <person name="Cherry J.L."/>
            <person name="DiCuccio M."/>
            <person name="Hlavina W."/>
            <person name="Kapustin Y."/>
            <person name="Meric P."/>
            <person name="Maglott D."/>
            <person name="Birtle Z."/>
            <person name="Marques A.C."/>
            <person name="Graves T."/>
            <person name="Zhou S."/>
            <person name="Teague B."/>
            <person name="Potamousis K."/>
            <person name="Churas C."/>
            <person name="Place M."/>
            <person name="Herschleb J."/>
            <person name="Runnheim R."/>
            <person name="Forrest D."/>
            <person name="Amos-Landgraf J."/>
            <person name="Schwartz D.C."/>
            <person name="Cheng Z."/>
            <person name="Lindblad-Toh K."/>
            <person name="Eichler E.E."/>
            <person name="Ponting C.P."/>
        </authorList>
    </citation>
    <scope>NUCLEOTIDE SEQUENCE [LARGE SCALE GENOMIC DNA]</scope>
    <source>
        <strain>C57BL/6J</strain>
    </source>
</reference>
<reference key="3">
    <citation type="journal article" date="2007" name="Proc. Natl. Acad. Sci. U.S.A.">
        <title>Large-scale phosphorylation analysis of mouse liver.</title>
        <authorList>
            <person name="Villen J."/>
            <person name="Beausoleil S.A."/>
            <person name="Gerber S.A."/>
            <person name="Gygi S.P."/>
        </authorList>
    </citation>
    <scope>PHOSPHORYLATION [LARGE SCALE ANALYSIS] AT SER-857 AND SER-960</scope>
    <scope>IDENTIFICATION BY MASS SPECTROMETRY [LARGE SCALE ANALYSIS]</scope>
    <source>
        <tissue>Liver</tissue>
    </source>
</reference>
<reference key="4">
    <citation type="journal article" date="2009" name="Immunity">
        <title>The phagosomal proteome in interferon-gamma-activated macrophages.</title>
        <authorList>
            <person name="Trost M."/>
            <person name="English L."/>
            <person name="Lemieux S."/>
            <person name="Courcelles M."/>
            <person name="Desjardins M."/>
            <person name="Thibault P."/>
        </authorList>
    </citation>
    <scope>PHOSPHORYLATION [LARGE SCALE ANALYSIS] AT SER-960</scope>
    <scope>IDENTIFICATION BY MASS SPECTROMETRY [LARGE SCALE ANALYSIS]</scope>
</reference>
<reference key="5">
    <citation type="journal article" date="2009" name="Mol. Cell. Proteomics">
        <title>Large scale localization of protein phosphorylation by use of electron capture dissociation mass spectrometry.</title>
        <authorList>
            <person name="Sweet S.M."/>
            <person name="Bailey C.M."/>
            <person name="Cunningham D.L."/>
            <person name="Heath J.K."/>
            <person name="Cooper H.J."/>
        </authorList>
    </citation>
    <scope>PHOSPHORYLATION [LARGE SCALE ANALYSIS] AT SER-227</scope>
    <scope>IDENTIFICATION BY MASS SPECTROMETRY [LARGE SCALE ANALYSIS]</scope>
    <source>
        <tissue>Embryonic fibroblast</tissue>
    </source>
</reference>
<reference key="6">
    <citation type="journal article" date="2010" name="Cell">
        <title>A tissue-specific atlas of mouse protein phosphorylation and expression.</title>
        <authorList>
            <person name="Huttlin E.L."/>
            <person name="Jedrychowski M.P."/>
            <person name="Elias J.E."/>
            <person name="Goswami T."/>
            <person name="Rad R."/>
            <person name="Beausoleil S.A."/>
            <person name="Villen J."/>
            <person name="Haas W."/>
            <person name="Sowa M.E."/>
            <person name="Gygi S.P."/>
        </authorList>
    </citation>
    <scope>PHOSPHORYLATION [LARGE SCALE ANALYSIS] AT SER-220; SER-227; SER-241; SER-299; SER-300; SER-632; SER-761; TYR-809; THR-811; SER-857; SER-960; SER-1011; SER-1031; SER-1181; SER-1184; THR-1186; SER-1190 AND SER-1361</scope>
    <scope>IDENTIFICATION BY MASS SPECTROMETRY [LARGE SCALE ANALYSIS]</scope>
    <source>
        <tissue>Brain</tissue>
        <tissue>Brown adipose tissue</tissue>
        <tissue>Heart</tissue>
        <tissue>Kidney</tissue>
        <tissue>Liver</tissue>
        <tissue>Lung</tissue>
        <tissue>Pancreas</tissue>
        <tissue>Spleen</tissue>
        <tissue>Testis</tissue>
    </source>
</reference>
<reference key="7">
    <citation type="journal article" date="2014" name="Mol. Cell. Proteomics">
        <title>Immunoaffinity enrichment and mass spectrometry analysis of protein methylation.</title>
        <authorList>
            <person name="Guo A."/>
            <person name="Gu H."/>
            <person name="Zhou J."/>
            <person name="Mulhern D."/>
            <person name="Wang Y."/>
            <person name="Lee K.A."/>
            <person name="Yang V."/>
            <person name="Aguiar M."/>
            <person name="Kornhauser J."/>
            <person name="Jia X."/>
            <person name="Ren J."/>
            <person name="Beausoleil S.A."/>
            <person name="Silva J.C."/>
            <person name="Vemulapalli V."/>
            <person name="Bedford M.T."/>
            <person name="Comb M.J."/>
        </authorList>
    </citation>
    <scope>METHYLATION [LARGE SCALE ANALYSIS] AT ARG-1159</scope>
    <scope>IDENTIFICATION BY MASS SPECTROMETRY [LARGE SCALE ANALYSIS]</scope>
    <source>
        <tissue>Brain</tissue>
        <tissue>Embryo</tissue>
    </source>
</reference>
<reference key="8">
    <citation type="journal article" date="2019" name="Exp. Cell Res.">
        <title>Fam208a orchestrates interaction protein network essential for early embryonic development and cell division.</title>
        <authorList>
            <person name="Gresakova V."/>
            <person name="Novosadova V."/>
            <person name="Prochazkova M."/>
            <person name="Bhargava S."/>
            <person name="Jenickova I."/>
            <person name="Prochazka J."/>
            <person name="Sedlacek R."/>
        </authorList>
    </citation>
    <scope>INTERACTION WITH TASOR</scope>
    <scope>TISSUE SPECIFICITY</scope>
</reference>
<accession>Q8K4L3</accession>
<accession>E9Q983</accession>
<sequence>MKRKERIARRLEGIENDSQPILLQSCTGLVTHRLLEEDTPRYMRATDPASPHIGRSKEEEDTPGSSLEKQTPSKYCIETSGIHSSGSMDTHSLESKAERIARYKAERRRQLAEKYGLTLDPEADSEYLSRYAKSRKDPDVTERRGKSDKQEEQSKDANSRHSRTESGPRTSLVASQDCTPLGSNMSDQEQLLNVENQRRVQDPPLGEDGSSAFFSERSISFPEVPRSPKQIPSSPLQQPASPNHPGDSPLPTEARASTGKPTHEWFLQRDSEGDTPSLINWPSRVKVREKLVKEESARSSPELTSESLTQRRQQPAPAHFLPIQSESSTFDRVTSKAVSSLQPSQSGVLPTDPVHAIKLVTMDTPESTSEFSWVGSATPKVIKSTTLKILEGGSRDAPVLHICESKAEDWLSPEPLERSPKSLLTSEDDRLVRGHKDPSGNKDLDKAIICSIDVESERERQVQHLPTQRTGRSEMLLYVQSGPVSQDATLTSHTKEASPKKRKVLARSLSDYTGPPQLQVPRHKDEAPSQELELQSSRAEGPGAEASVLDTRVSVAQLRNIFMESTRASKKPELQSRVERSAEGIGLPMERERGSRKPRRYLSPGESRKTSERFRTQPITSAERKESDRYPSGSEIPVVEDEEKVDERAKLSVAAKRLLFREMEKSFDEHTVPKRHSRNAAVEQRLRRLQDRSHTQPITTEEVVIAATEPIPASCSGVTHPVTARLPSPTVARSSVQPARLQASAHQKALARDQANEGRESAEPGEPDSSTLSLAEKLALFNKLSQPVSKAISTRNRIDVRQRRMNARYQTQPVTLGEVEQVQSGKLISFSPTVNTSVSIMASAVAPTYAGDLRKLSVDNNTSATDYKSPPAENSDSPVRSILKPQAWRPLVEHSGSKGMPGESGKTESKNALTVAAEDSGVQTRGAFEEEEEPSYPILGRVREGDGQKEPKHVVLRRGSLELGNPSAAHLGDELKEVSTAKSSLQENLDLKDKQASEENTDVETVMRKFSLKEFGETTSEQTEVAARKASVQMATPGAWKQQESSEQLAEKLFKNPCAMFASGEVKVPVGDSFLDSPSKTMSIKERLALLKKSGEEDWKNRLIRKQEYGKATGGLHTQEVEQSLKKKRVTESRESQMTIEERKHLITVREEAWKTKGRGAANDSTQFTVAGRMVKKGLASPTSITPISSPLCSKSRGTTPVSKPLEDIEARPDMQLESDLKLDRLETFLRRLNNKVAGIQETVLTVTGKSVKEVMKLDDDETFAKFYRSVDHSIPRSPVELEEDFDVIFDPYAPKLTSSVAEHKRQVRPKRRVQASKNPLKLLAARDDLLQEYTEQRLNVAFMESKRMKVEKMSSNSNFSEVTLAGLASRENFSNINLRSVNLMEQNSNNSAMPYKKLMLLQIKGRRHVQTRLVEPRASSLNSGDCFLLLSPQYCFLWVGEFSNVIEKAKASELATLIQTKRELGCRATYIQTIEEGINTHTHAAKDFWKLLGGQTSYQSAGDPKEDELYETAIIETNCVYRLTDDKLVPDDDYWGKIPKCSLLQSKEVLVFDFGSEVYVWHGKEVTLAQRKIAFQLAKHLWNGTFDYENCDINPLDPGECNPLIPRKGQGRPDWAIFGRVTEHNETILFKEKFLDWTELKRPTEKNSGEVVQQKDDPRADVKPYDVTRMVATPQITAGTILDGVNVGRGYGLVEGDDRRQFEIATVSVDVWHILEFDYSRLPRQSIGQFHEGDAYVVKWKYMASTAVGSRQKGEHLVRVAGKEKCVYFFWQGRHSTVSEKGTSALMTVELDEERGAQVQVLQGKEPPCFLQCFQGGMVVHSGRREEEEENVQSEWRLYCVRGEVPMEGNLLEVACHCSSLRSRTSMVVLNINKALIYLWHGCKAQGHTKEVGRTAANKIKEECPLEAGLHSSSNVTIHECDEGSEPLGFWDALGRRDRKAYDCMLQDPGSFNFAPRLFILSSSSGDFSATEFVYPAQAPSAVSSMPFLQEDLYSAPQPALFLVDNHHEVYLWQGWWPTENKITGSARIRWASDRKSAMETVLQYCRGKNLKRPPPKSYLIHAGLEPLTFTNMFPSWEHREDIAEITEMDTEVSNQITLVEDVLAKLCKTIYPLADLLARPLPEGVDPLKLEIYLTDEDFEFALDMSRDEFNALPTWKQVNLKKSKGLF</sequence>
<dbReference type="EMBL" id="AF317422">
    <property type="protein sequence ID" value="AAM89518.1"/>
    <property type="molecule type" value="mRNA"/>
</dbReference>
<dbReference type="EMBL" id="AC115928">
    <property type="status" value="NOT_ANNOTATED_CDS"/>
    <property type="molecule type" value="Genomic_DNA"/>
</dbReference>
<dbReference type="EMBL" id="AC124770">
    <property type="status" value="NOT_ANNOTATED_CDS"/>
    <property type="molecule type" value="Genomic_DNA"/>
</dbReference>
<dbReference type="CCDS" id="CCDS37720.1">
    <molecule id="Q8K4L3-1"/>
</dbReference>
<dbReference type="CCDS" id="CCDS84352.1">
    <molecule id="Q8K4L3-3"/>
</dbReference>
<dbReference type="RefSeq" id="NP_001334378.1">
    <molecule id="Q8K4L3-3"/>
    <property type="nucleotide sequence ID" value="NM_001347449.1"/>
</dbReference>
<dbReference type="RefSeq" id="NP_001392211.1">
    <molecule id="Q8K4L3-1"/>
    <property type="nucleotide sequence ID" value="NM_001405282.1"/>
</dbReference>
<dbReference type="RefSeq" id="NP_694793.1">
    <molecule id="Q8K4L3-1"/>
    <property type="nucleotide sequence ID" value="NM_153153.4"/>
</dbReference>
<dbReference type="RefSeq" id="XP_011245180.1">
    <molecule id="Q8K4L3-1"/>
    <property type="nucleotide sequence ID" value="XM_011246878.4"/>
</dbReference>
<dbReference type="RefSeq" id="XP_030106275.1">
    <molecule id="Q8K4L3-3"/>
    <property type="nucleotide sequence ID" value="XM_030250415.2"/>
</dbReference>
<dbReference type="RefSeq" id="XP_036016970.1">
    <molecule id="Q8K4L3-1"/>
    <property type="nucleotide sequence ID" value="XM_036161077.1"/>
</dbReference>
<dbReference type="RefSeq" id="XP_036016980.1">
    <molecule id="Q8K4L3-3"/>
    <property type="nucleotide sequence ID" value="XM_036161087.1"/>
</dbReference>
<dbReference type="SMR" id="Q8K4L3"/>
<dbReference type="BioGRID" id="230358">
    <property type="interactions" value="11"/>
</dbReference>
<dbReference type="FunCoup" id="Q8K4L3">
    <property type="interactions" value="1462"/>
</dbReference>
<dbReference type="IntAct" id="Q8K4L3">
    <property type="interactions" value="3"/>
</dbReference>
<dbReference type="MINT" id="Q8K4L3"/>
<dbReference type="STRING" id="10090.ENSMUSP00000115078"/>
<dbReference type="GlyGen" id="Q8K4L3">
    <property type="glycosylation" value="3 sites, 1 O-linked glycan (1 site)"/>
</dbReference>
<dbReference type="iPTMnet" id="Q8K4L3"/>
<dbReference type="PhosphoSitePlus" id="Q8K4L3"/>
<dbReference type="jPOST" id="Q8K4L3"/>
<dbReference type="PaxDb" id="10090-ENSMUSP00000115078"/>
<dbReference type="PeptideAtlas" id="Q8K4L3"/>
<dbReference type="ProteomicsDB" id="254785">
    <molecule id="Q8K4L3-1"/>
</dbReference>
<dbReference type="ProteomicsDB" id="254786">
    <molecule id="Q8K4L3-3"/>
</dbReference>
<dbReference type="Pumba" id="Q8K4L3"/>
<dbReference type="Antibodypedia" id="4390">
    <property type="antibodies" value="118 antibodies from 20 providers"/>
</dbReference>
<dbReference type="DNASU" id="225115"/>
<dbReference type="Ensembl" id="ENSMUST00000025079.16">
    <molecule id="Q8K4L3-1"/>
    <property type="protein sequence ID" value="ENSMUSP00000025079.10"/>
    <property type="gene ID" value="ENSMUSG00000024236.19"/>
</dbReference>
<dbReference type="Ensembl" id="ENSMUST00000126977.8">
    <molecule id="Q8K4L3-1"/>
    <property type="protein sequence ID" value="ENSMUSP00000115078.2"/>
    <property type="gene ID" value="ENSMUSG00000024236.19"/>
</dbReference>
<dbReference type="Ensembl" id="ENSMUST00000140448.8">
    <molecule id="Q8K4L3-1"/>
    <property type="protein sequence ID" value="ENSMUSP00000119803.2"/>
    <property type="gene ID" value="ENSMUSG00000024236.19"/>
</dbReference>
<dbReference type="Ensembl" id="ENSMUST00000143254.8">
    <molecule id="Q8K4L3-3"/>
    <property type="protein sequence ID" value="ENSMUSP00000119287.2"/>
    <property type="gene ID" value="ENSMUSG00000024236.19"/>
</dbReference>
<dbReference type="GeneID" id="225115"/>
<dbReference type="KEGG" id="mmu:225115"/>
<dbReference type="UCSC" id="uc008dyr.2">
    <molecule id="Q8K4L3-1"/>
    <property type="organism name" value="mouse"/>
</dbReference>
<dbReference type="UCSC" id="uc012aza.1">
    <property type="organism name" value="mouse"/>
</dbReference>
<dbReference type="AGR" id="MGI:2147319"/>
<dbReference type="CTD" id="6840"/>
<dbReference type="MGI" id="MGI:2147319">
    <property type="gene designation" value="Svil"/>
</dbReference>
<dbReference type="VEuPathDB" id="HostDB:ENSMUSG00000024236"/>
<dbReference type="eggNOG" id="KOG0445">
    <property type="taxonomic scope" value="Eukaryota"/>
</dbReference>
<dbReference type="GeneTree" id="ENSGT00940000154653"/>
<dbReference type="InParanoid" id="Q8K4L3"/>
<dbReference type="OMA" id="GKLKHEW"/>
<dbReference type="OrthoDB" id="6414989at2759"/>
<dbReference type="PhylomeDB" id="Q8K4L3"/>
<dbReference type="TreeFam" id="TF316081"/>
<dbReference type="BioGRID-ORCS" id="225115">
    <property type="hits" value="2 hits in 73 CRISPR screens"/>
</dbReference>
<dbReference type="ChiTaRS" id="Svil">
    <property type="organism name" value="mouse"/>
</dbReference>
<dbReference type="PRO" id="PR:Q8K4L3"/>
<dbReference type="Proteomes" id="UP000000589">
    <property type="component" value="Chromosome 18"/>
</dbReference>
<dbReference type="RNAct" id="Q8K4L3">
    <property type="molecule type" value="protein"/>
</dbReference>
<dbReference type="Bgee" id="ENSMUSG00000024236">
    <property type="expression patterns" value="Expressed in soleus muscle and 282 other cell types or tissues"/>
</dbReference>
<dbReference type="ExpressionAtlas" id="Q8K4L3">
    <property type="expression patterns" value="baseline and differential"/>
</dbReference>
<dbReference type="GO" id="GO:0071944">
    <property type="term" value="C:cell periphery"/>
    <property type="evidence" value="ECO:0000314"/>
    <property type="project" value="MGI"/>
</dbReference>
<dbReference type="GO" id="GO:0042995">
    <property type="term" value="C:cell projection"/>
    <property type="evidence" value="ECO:0007669"/>
    <property type="project" value="UniProtKB-SubCell"/>
</dbReference>
<dbReference type="GO" id="GO:0032154">
    <property type="term" value="C:cleavage furrow"/>
    <property type="evidence" value="ECO:0000250"/>
    <property type="project" value="UniProtKB"/>
</dbReference>
<dbReference type="GO" id="GO:0043034">
    <property type="term" value="C:costamere"/>
    <property type="evidence" value="ECO:0000314"/>
    <property type="project" value="MGI"/>
</dbReference>
<dbReference type="GO" id="GO:0005737">
    <property type="term" value="C:cytoplasm"/>
    <property type="evidence" value="ECO:0000314"/>
    <property type="project" value="MGI"/>
</dbReference>
<dbReference type="GO" id="GO:0005925">
    <property type="term" value="C:focal adhesion"/>
    <property type="evidence" value="ECO:0000314"/>
    <property type="project" value="MGI"/>
</dbReference>
<dbReference type="GO" id="GO:0036449">
    <property type="term" value="C:microtubule minus-end"/>
    <property type="evidence" value="ECO:0000250"/>
    <property type="project" value="UniProtKB"/>
</dbReference>
<dbReference type="GO" id="GO:0030496">
    <property type="term" value="C:midbody"/>
    <property type="evidence" value="ECO:0000250"/>
    <property type="project" value="UniProtKB"/>
</dbReference>
<dbReference type="GO" id="GO:0005654">
    <property type="term" value="C:nucleoplasm"/>
    <property type="evidence" value="ECO:0000314"/>
    <property type="project" value="MGI"/>
</dbReference>
<dbReference type="GO" id="GO:0002102">
    <property type="term" value="C:podosome"/>
    <property type="evidence" value="ECO:0007669"/>
    <property type="project" value="UniProtKB-SubCell"/>
</dbReference>
<dbReference type="GO" id="GO:0042383">
    <property type="term" value="C:sarcolemma"/>
    <property type="evidence" value="ECO:0000314"/>
    <property type="project" value="MGI"/>
</dbReference>
<dbReference type="GO" id="GO:0051015">
    <property type="term" value="F:actin filament binding"/>
    <property type="evidence" value="ECO:0000314"/>
    <property type="project" value="MGI"/>
</dbReference>
<dbReference type="GO" id="GO:0007010">
    <property type="term" value="P:cytoskeleton organization"/>
    <property type="evidence" value="ECO:0007669"/>
    <property type="project" value="InterPro"/>
</dbReference>
<dbReference type="GO" id="GO:0042692">
    <property type="term" value="P:muscle cell differentiation"/>
    <property type="evidence" value="ECO:0000314"/>
    <property type="project" value="MGI"/>
</dbReference>
<dbReference type="GO" id="GO:0032467">
    <property type="term" value="P:positive regulation of cytokinesis"/>
    <property type="evidence" value="ECO:0000250"/>
    <property type="project" value="UniProtKB"/>
</dbReference>
<dbReference type="CDD" id="cd11280">
    <property type="entry name" value="gelsolin_like"/>
    <property type="match status" value="1"/>
</dbReference>
<dbReference type="CDD" id="cd11289">
    <property type="entry name" value="gelsolin_S2_like"/>
    <property type="match status" value="1"/>
</dbReference>
<dbReference type="CDD" id="cd11293">
    <property type="entry name" value="gelsolin_S4_like"/>
    <property type="match status" value="1"/>
</dbReference>
<dbReference type="CDD" id="cd11288">
    <property type="entry name" value="gelsolin_S5_like"/>
    <property type="match status" value="1"/>
</dbReference>
<dbReference type="FunFam" id="3.40.20.10:FF:000017">
    <property type="entry name" value="Supervillin"/>
    <property type="match status" value="1"/>
</dbReference>
<dbReference type="FunFam" id="3.40.20.10:FF:000013">
    <property type="entry name" value="supervillin isoform X1"/>
    <property type="match status" value="1"/>
</dbReference>
<dbReference type="FunFam" id="1.10.950.10:FF:000003">
    <property type="entry name" value="supervillin isoform X2"/>
    <property type="match status" value="1"/>
</dbReference>
<dbReference type="FunFam" id="3.40.20.10:FF:000015">
    <property type="entry name" value="supervillin isoform X2"/>
    <property type="match status" value="1"/>
</dbReference>
<dbReference type="FunFam" id="3.40.20.10:FF:000016">
    <property type="entry name" value="supervillin isoform X2"/>
    <property type="match status" value="1"/>
</dbReference>
<dbReference type="FunFam" id="3.40.20.10:FF:000022">
    <property type="entry name" value="supervillin isoform X2"/>
    <property type="match status" value="1"/>
</dbReference>
<dbReference type="Gene3D" id="3.40.20.10">
    <property type="entry name" value="Severin"/>
    <property type="match status" value="5"/>
</dbReference>
<dbReference type="Gene3D" id="1.10.950.10">
    <property type="entry name" value="Villin headpiece domain"/>
    <property type="match status" value="1"/>
</dbReference>
<dbReference type="InterPro" id="IPR029006">
    <property type="entry name" value="ADF-H/Gelsolin-like_dom_sf"/>
</dbReference>
<dbReference type="InterPro" id="IPR007123">
    <property type="entry name" value="Gelsolin-like_dom"/>
</dbReference>
<dbReference type="InterPro" id="IPR007122">
    <property type="entry name" value="Villin/Gelsolin"/>
</dbReference>
<dbReference type="InterPro" id="IPR003128">
    <property type="entry name" value="Villin_headpiece"/>
</dbReference>
<dbReference type="InterPro" id="IPR036886">
    <property type="entry name" value="Villin_headpiece_dom_sf"/>
</dbReference>
<dbReference type="PANTHER" id="PTHR11977:SF45">
    <property type="entry name" value="SUPERVILLIN"/>
    <property type="match status" value="1"/>
</dbReference>
<dbReference type="PANTHER" id="PTHR11977">
    <property type="entry name" value="VILLIN"/>
    <property type="match status" value="1"/>
</dbReference>
<dbReference type="Pfam" id="PF00626">
    <property type="entry name" value="Gelsolin"/>
    <property type="match status" value="1"/>
</dbReference>
<dbReference type="Pfam" id="PF02209">
    <property type="entry name" value="VHP"/>
    <property type="match status" value="1"/>
</dbReference>
<dbReference type="PRINTS" id="PR00597">
    <property type="entry name" value="GELSOLIN"/>
</dbReference>
<dbReference type="SMART" id="SM00262">
    <property type="entry name" value="GEL"/>
    <property type="match status" value="5"/>
</dbReference>
<dbReference type="SMART" id="SM00153">
    <property type="entry name" value="VHP"/>
    <property type="match status" value="1"/>
</dbReference>
<dbReference type="SUPFAM" id="SSF55753">
    <property type="entry name" value="Actin depolymerizing proteins"/>
    <property type="match status" value="5"/>
</dbReference>
<dbReference type="SUPFAM" id="SSF47050">
    <property type="entry name" value="VHP, Villin headpiece domain"/>
    <property type="match status" value="1"/>
</dbReference>
<dbReference type="PROSITE" id="PS51089">
    <property type="entry name" value="HP"/>
    <property type="match status" value="1"/>
</dbReference>
<evidence type="ECO:0000250" key="1"/>
<evidence type="ECO:0000250" key="2">
    <source>
        <dbReference type="UniProtKB" id="O46385"/>
    </source>
</evidence>
<evidence type="ECO:0000250" key="3">
    <source>
        <dbReference type="UniProtKB" id="O95425"/>
    </source>
</evidence>
<evidence type="ECO:0000255" key="4">
    <source>
        <dbReference type="PROSITE-ProRule" id="PRU00595"/>
    </source>
</evidence>
<evidence type="ECO:0000256" key="5">
    <source>
        <dbReference type="SAM" id="MobiDB-lite"/>
    </source>
</evidence>
<evidence type="ECO:0000269" key="6">
    <source>
    </source>
</evidence>
<evidence type="ECO:0000305" key="7"/>
<evidence type="ECO:0007744" key="8">
    <source>
    </source>
</evidence>
<evidence type="ECO:0007744" key="9">
    <source>
    </source>
</evidence>
<evidence type="ECO:0007744" key="10">
    <source>
    </source>
</evidence>
<evidence type="ECO:0007744" key="11">
    <source>
    </source>
</evidence>
<evidence type="ECO:0007744" key="12">
    <source>
    </source>
</evidence>